<keyword id="KW-0963">Cytoplasm</keyword>
<keyword id="KW-1185">Reference proteome</keyword>
<organism>
    <name type="scientific">Halalkalibacterium halodurans (strain ATCC BAA-125 / DSM 18197 / FERM 7344 / JCM 9153 / C-125)</name>
    <name type="common">Bacillus halodurans</name>
    <dbReference type="NCBI Taxonomy" id="272558"/>
    <lineage>
        <taxon>Bacteria</taxon>
        <taxon>Bacillati</taxon>
        <taxon>Bacillota</taxon>
        <taxon>Bacilli</taxon>
        <taxon>Bacillales</taxon>
        <taxon>Bacillaceae</taxon>
        <taxon>Halalkalibacterium (ex Joshi et al. 2022)</taxon>
    </lineage>
</organism>
<proteinExistence type="inferred from homology"/>
<feature type="chain" id="PRO_0000074654" description="UPF0298 protein BH2594">
    <location>
        <begin position="1"/>
        <end position="92"/>
    </location>
</feature>
<protein>
    <recommendedName>
        <fullName evidence="1">UPF0298 protein BH2594</fullName>
    </recommendedName>
</protein>
<dbReference type="EMBL" id="BA000004">
    <property type="protein sequence ID" value="BAB06313.1"/>
    <property type="molecule type" value="Genomic_DNA"/>
</dbReference>
<dbReference type="PIR" id="B83974">
    <property type="entry name" value="B83974"/>
</dbReference>
<dbReference type="RefSeq" id="WP_010898745.1">
    <property type="nucleotide sequence ID" value="NC_002570.2"/>
</dbReference>
<dbReference type="SMR" id="Q9K9Q1"/>
<dbReference type="STRING" id="272558.gene:10728492"/>
<dbReference type="KEGG" id="bha:BH2594"/>
<dbReference type="eggNOG" id="COG4471">
    <property type="taxonomic scope" value="Bacteria"/>
</dbReference>
<dbReference type="HOGENOM" id="CLU_159890_2_0_9"/>
<dbReference type="OrthoDB" id="2990788at2"/>
<dbReference type="Proteomes" id="UP000001258">
    <property type="component" value="Chromosome"/>
</dbReference>
<dbReference type="GO" id="GO:0005737">
    <property type="term" value="C:cytoplasm"/>
    <property type="evidence" value="ECO:0007669"/>
    <property type="project" value="UniProtKB-SubCell"/>
</dbReference>
<dbReference type="HAMAP" id="MF_01126">
    <property type="entry name" value="UPF0298"/>
    <property type="match status" value="1"/>
</dbReference>
<dbReference type="InterPro" id="IPR016979">
    <property type="entry name" value="DUF2129"/>
</dbReference>
<dbReference type="NCBIfam" id="NF002777">
    <property type="entry name" value="PRK02886.1"/>
    <property type="match status" value="1"/>
</dbReference>
<dbReference type="Pfam" id="PF09902">
    <property type="entry name" value="DUF2129"/>
    <property type="match status" value="1"/>
</dbReference>
<dbReference type="PIRSF" id="PIRSF031653">
    <property type="entry name" value="UCP031653"/>
    <property type="match status" value="1"/>
</dbReference>
<gene>
    <name type="ordered locus">BH2594</name>
</gene>
<accession>Q9K9Q1</accession>
<name>Y2594_HALH5</name>
<reference key="1">
    <citation type="journal article" date="2000" name="Nucleic Acids Res.">
        <title>Complete genome sequence of the alkaliphilic bacterium Bacillus halodurans and genomic sequence comparison with Bacillus subtilis.</title>
        <authorList>
            <person name="Takami H."/>
            <person name="Nakasone K."/>
            <person name="Takaki Y."/>
            <person name="Maeno G."/>
            <person name="Sasaki R."/>
            <person name="Masui N."/>
            <person name="Fuji F."/>
            <person name="Hirama C."/>
            <person name="Nakamura Y."/>
            <person name="Ogasawara N."/>
            <person name="Kuhara S."/>
            <person name="Horikoshi K."/>
        </authorList>
    </citation>
    <scope>NUCLEOTIDE SEQUENCE [LARGE SCALE GENOMIC DNA]</scope>
    <source>
        <strain>ATCC BAA-125 / DSM 18197 / FERM 7344 / JCM 9153 / C-125</strain>
    </source>
</reference>
<evidence type="ECO:0000255" key="1">
    <source>
        <dbReference type="HAMAP-Rule" id="MF_01126"/>
    </source>
</evidence>
<comment type="subcellular location">
    <subcellularLocation>
        <location evidence="1">Cytoplasm</location>
    </subcellularLocation>
</comment>
<comment type="similarity">
    <text evidence="1">Belongs to the UPF0298 family.</text>
</comment>
<sequence length="92" mass="11004">MLTSNRQGMAVYLTSLKFARQLRRFGYVHYVSKKMRYVVLYCNEEAVQTTMEKLQSFHFVKDVQLSMRPYVQTEFQNAKPDKAKEYDYKMGL</sequence>